<accession>Q02T89</accession>
<feature type="chain" id="PRO_1000005562" description="Large ribosomal subunit protein uL10">
    <location>
        <begin position="1"/>
        <end position="166"/>
    </location>
</feature>
<reference key="1">
    <citation type="journal article" date="2006" name="Genome Biol.">
        <title>Genomic analysis reveals that Pseudomonas aeruginosa virulence is combinatorial.</title>
        <authorList>
            <person name="Lee D.G."/>
            <person name="Urbach J.M."/>
            <person name="Wu G."/>
            <person name="Liberati N.T."/>
            <person name="Feinbaum R.L."/>
            <person name="Miyata S."/>
            <person name="Diggins L.T."/>
            <person name="He J."/>
            <person name="Saucier M."/>
            <person name="Deziel E."/>
            <person name="Friedman L."/>
            <person name="Li L."/>
            <person name="Grills G."/>
            <person name="Montgomery K."/>
            <person name="Kucherlapati R."/>
            <person name="Rahme L.G."/>
            <person name="Ausubel F.M."/>
        </authorList>
    </citation>
    <scope>NUCLEOTIDE SEQUENCE [LARGE SCALE GENOMIC DNA]</scope>
    <source>
        <strain>UCBPP-PA14</strain>
    </source>
</reference>
<organism>
    <name type="scientific">Pseudomonas aeruginosa (strain UCBPP-PA14)</name>
    <dbReference type="NCBI Taxonomy" id="208963"/>
    <lineage>
        <taxon>Bacteria</taxon>
        <taxon>Pseudomonadati</taxon>
        <taxon>Pseudomonadota</taxon>
        <taxon>Gammaproteobacteria</taxon>
        <taxon>Pseudomonadales</taxon>
        <taxon>Pseudomonadaceae</taxon>
        <taxon>Pseudomonas</taxon>
    </lineage>
</organism>
<gene>
    <name evidence="1" type="primary">rplJ</name>
    <name type="ordered locus">PA14_08740</name>
</gene>
<proteinExistence type="inferred from homology"/>
<evidence type="ECO:0000255" key="1">
    <source>
        <dbReference type="HAMAP-Rule" id="MF_00362"/>
    </source>
</evidence>
<evidence type="ECO:0000305" key="2"/>
<protein>
    <recommendedName>
        <fullName evidence="1">Large ribosomal subunit protein uL10</fullName>
    </recommendedName>
    <alternativeName>
        <fullName evidence="2">50S ribosomal protein L10</fullName>
    </alternativeName>
</protein>
<keyword id="KW-0687">Ribonucleoprotein</keyword>
<keyword id="KW-0689">Ribosomal protein</keyword>
<keyword id="KW-0694">RNA-binding</keyword>
<keyword id="KW-0699">rRNA-binding</keyword>
<comment type="function">
    <text evidence="1">Forms part of the ribosomal stalk, playing a central role in the interaction of the ribosome with GTP-bound translation factors.</text>
</comment>
<comment type="subunit">
    <text evidence="1">Part of the ribosomal stalk of the 50S ribosomal subunit. The N-terminus interacts with L11 and the large rRNA to form the base of the stalk. The C-terminus forms an elongated spine to which L12 dimers bind in a sequential fashion forming a multimeric L10(L12)X complex.</text>
</comment>
<comment type="similarity">
    <text evidence="1">Belongs to the universal ribosomal protein uL10 family.</text>
</comment>
<name>RL10_PSEAB</name>
<sequence>MAIKLEDKKAIVAEVNEAAKAALSAVVADARGVTVGAMTGLRKEAREAGVYVKVVRNTLLKRAVEGTQFDVLNDVFKGPTLIAFSNEHPGAAARIFREFAKGQDKFEIKAAAFEGQFLAANQIDVLASLPTYDEAVSQLMSVIQGATSKLARTLAAIRDQKEAAAA</sequence>
<dbReference type="EMBL" id="CP000438">
    <property type="protein sequence ID" value="ABJ13543.1"/>
    <property type="molecule type" value="Genomic_DNA"/>
</dbReference>
<dbReference type="RefSeq" id="WP_003093748.1">
    <property type="nucleotide sequence ID" value="NZ_CP034244.1"/>
</dbReference>
<dbReference type="SMR" id="Q02T89"/>
<dbReference type="GeneID" id="77219189"/>
<dbReference type="KEGG" id="pau:PA14_08740"/>
<dbReference type="PseudoCAP" id="PA14_08740"/>
<dbReference type="HOGENOM" id="CLU_092227_0_2_6"/>
<dbReference type="BioCyc" id="PAER208963:G1G74-727-MONOMER"/>
<dbReference type="Proteomes" id="UP000000653">
    <property type="component" value="Chromosome"/>
</dbReference>
<dbReference type="GO" id="GO:0015934">
    <property type="term" value="C:large ribosomal subunit"/>
    <property type="evidence" value="ECO:0007669"/>
    <property type="project" value="InterPro"/>
</dbReference>
<dbReference type="GO" id="GO:0070180">
    <property type="term" value="F:large ribosomal subunit rRNA binding"/>
    <property type="evidence" value="ECO:0007669"/>
    <property type="project" value="UniProtKB-UniRule"/>
</dbReference>
<dbReference type="GO" id="GO:0003735">
    <property type="term" value="F:structural constituent of ribosome"/>
    <property type="evidence" value="ECO:0007669"/>
    <property type="project" value="InterPro"/>
</dbReference>
<dbReference type="GO" id="GO:0006412">
    <property type="term" value="P:translation"/>
    <property type="evidence" value="ECO:0007669"/>
    <property type="project" value="UniProtKB-UniRule"/>
</dbReference>
<dbReference type="CDD" id="cd05797">
    <property type="entry name" value="Ribosomal_L10"/>
    <property type="match status" value="1"/>
</dbReference>
<dbReference type="FunFam" id="3.30.70.1730:FF:000001">
    <property type="entry name" value="50S ribosomal protein L10"/>
    <property type="match status" value="1"/>
</dbReference>
<dbReference type="Gene3D" id="3.30.70.1730">
    <property type="match status" value="1"/>
</dbReference>
<dbReference type="Gene3D" id="6.10.250.2350">
    <property type="match status" value="1"/>
</dbReference>
<dbReference type="HAMAP" id="MF_00362">
    <property type="entry name" value="Ribosomal_uL10"/>
    <property type="match status" value="1"/>
</dbReference>
<dbReference type="InterPro" id="IPR001790">
    <property type="entry name" value="Ribosomal_uL10"/>
</dbReference>
<dbReference type="InterPro" id="IPR043141">
    <property type="entry name" value="Ribosomal_uL10-like_sf"/>
</dbReference>
<dbReference type="InterPro" id="IPR022973">
    <property type="entry name" value="Ribosomal_uL10_bac"/>
</dbReference>
<dbReference type="InterPro" id="IPR047865">
    <property type="entry name" value="Ribosomal_uL10_bac_type"/>
</dbReference>
<dbReference type="InterPro" id="IPR002363">
    <property type="entry name" value="Ribosomal_uL10_CS_bac"/>
</dbReference>
<dbReference type="NCBIfam" id="NF000955">
    <property type="entry name" value="PRK00099.1-1"/>
    <property type="match status" value="1"/>
</dbReference>
<dbReference type="PANTHER" id="PTHR11560">
    <property type="entry name" value="39S RIBOSOMAL PROTEIN L10, MITOCHONDRIAL"/>
    <property type="match status" value="1"/>
</dbReference>
<dbReference type="Pfam" id="PF00466">
    <property type="entry name" value="Ribosomal_L10"/>
    <property type="match status" value="1"/>
</dbReference>
<dbReference type="SUPFAM" id="SSF160369">
    <property type="entry name" value="Ribosomal protein L10-like"/>
    <property type="match status" value="1"/>
</dbReference>
<dbReference type="PROSITE" id="PS01109">
    <property type="entry name" value="RIBOSOMAL_L10"/>
    <property type="match status" value="1"/>
</dbReference>